<dbReference type="EC" id="2.7.4.9" evidence="1"/>
<dbReference type="EMBL" id="BA000019">
    <property type="protein sequence ID" value="BAB76407.1"/>
    <property type="molecule type" value="Genomic_DNA"/>
</dbReference>
<dbReference type="PIR" id="AD2394">
    <property type="entry name" value="AD2394"/>
</dbReference>
<dbReference type="RefSeq" id="WP_010998839.1">
    <property type="nucleotide sequence ID" value="NZ_RSCN01000020.1"/>
</dbReference>
<dbReference type="SMR" id="Q8YN62"/>
<dbReference type="STRING" id="103690.gene:10496761"/>
<dbReference type="KEGG" id="ana:all4708"/>
<dbReference type="eggNOG" id="COG0125">
    <property type="taxonomic scope" value="Bacteria"/>
</dbReference>
<dbReference type="OrthoDB" id="9774907at2"/>
<dbReference type="Proteomes" id="UP000002483">
    <property type="component" value="Chromosome"/>
</dbReference>
<dbReference type="GO" id="GO:0005829">
    <property type="term" value="C:cytosol"/>
    <property type="evidence" value="ECO:0007669"/>
    <property type="project" value="TreeGrafter"/>
</dbReference>
<dbReference type="GO" id="GO:0005524">
    <property type="term" value="F:ATP binding"/>
    <property type="evidence" value="ECO:0007669"/>
    <property type="project" value="UniProtKB-UniRule"/>
</dbReference>
<dbReference type="GO" id="GO:0004798">
    <property type="term" value="F:dTMP kinase activity"/>
    <property type="evidence" value="ECO:0007669"/>
    <property type="project" value="UniProtKB-UniRule"/>
</dbReference>
<dbReference type="GO" id="GO:0006233">
    <property type="term" value="P:dTDP biosynthetic process"/>
    <property type="evidence" value="ECO:0007669"/>
    <property type="project" value="InterPro"/>
</dbReference>
<dbReference type="GO" id="GO:0006235">
    <property type="term" value="P:dTTP biosynthetic process"/>
    <property type="evidence" value="ECO:0007669"/>
    <property type="project" value="UniProtKB-UniRule"/>
</dbReference>
<dbReference type="GO" id="GO:0006227">
    <property type="term" value="P:dUDP biosynthetic process"/>
    <property type="evidence" value="ECO:0007669"/>
    <property type="project" value="TreeGrafter"/>
</dbReference>
<dbReference type="CDD" id="cd01672">
    <property type="entry name" value="TMPK"/>
    <property type="match status" value="1"/>
</dbReference>
<dbReference type="FunFam" id="3.40.50.300:FF:000225">
    <property type="entry name" value="Thymidylate kinase"/>
    <property type="match status" value="1"/>
</dbReference>
<dbReference type="Gene3D" id="3.40.50.300">
    <property type="entry name" value="P-loop containing nucleotide triphosphate hydrolases"/>
    <property type="match status" value="1"/>
</dbReference>
<dbReference type="HAMAP" id="MF_00165">
    <property type="entry name" value="Thymidylate_kinase"/>
    <property type="match status" value="1"/>
</dbReference>
<dbReference type="InterPro" id="IPR027417">
    <property type="entry name" value="P-loop_NTPase"/>
</dbReference>
<dbReference type="InterPro" id="IPR039430">
    <property type="entry name" value="Thymidylate_kin-like_dom"/>
</dbReference>
<dbReference type="InterPro" id="IPR018095">
    <property type="entry name" value="Thymidylate_kin_CS"/>
</dbReference>
<dbReference type="InterPro" id="IPR018094">
    <property type="entry name" value="Thymidylate_kinase"/>
</dbReference>
<dbReference type="NCBIfam" id="TIGR00041">
    <property type="entry name" value="DTMP_kinase"/>
    <property type="match status" value="1"/>
</dbReference>
<dbReference type="PANTHER" id="PTHR10344">
    <property type="entry name" value="THYMIDYLATE KINASE"/>
    <property type="match status" value="1"/>
</dbReference>
<dbReference type="PANTHER" id="PTHR10344:SF4">
    <property type="entry name" value="UMP-CMP KINASE 2, MITOCHONDRIAL"/>
    <property type="match status" value="1"/>
</dbReference>
<dbReference type="Pfam" id="PF02223">
    <property type="entry name" value="Thymidylate_kin"/>
    <property type="match status" value="1"/>
</dbReference>
<dbReference type="SUPFAM" id="SSF52540">
    <property type="entry name" value="P-loop containing nucleoside triphosphate hydrolases"/>
    <property type="match status" value="1"/>
</dbReference>
<dbReference type="PROSITE" id="PS01331">
    <property type="entry name" value="THYMIDYLATE_KINASE"/>
    <property type="match status" value="1"/>
</dbReference>
<gene>
    <name evidence="1" type="primary">tmk</name>
    <name type="ordered locus">all4708</name>
</gene>
<keyword id="KW-0067">ATP-binding</keyword>
<keyword id="KW-0418">Kinase</keyword>
<keyword id="KW-0545">Nucleotide biosynthesis</keyword>
<keyword id="KW-0547">Nucleotide-binding</keyword>
<keyword id="KW-1185">Reference proteome</keyword>
<keyword id="KW-0808">Transferase</keyword>
<evidence type="ECO:0000255" key="1">
    <source>
        <dbReference type="HAMAP-Rule" id="MF_00165"/>
    </source>
</evidence>
<reference key="1">
    <citation type="journal article" date="2001" name="DNA Res.">
        <title>Complete genomic sequence of the filamentous nitrogen-fixing cyanobacterium Anabaena sp. strain PCC 7120.</title>
        <authorList>
            <person name="Kaneko T."/>
            <person name="Nakamura Y."/>
            <person name="Wolk C.P."/>
            <person name="Kuritz T."/>
            <person name="Sasamoto S."/>
            <person name="Watanabe A."/>
            <person name="Iriguchi M."/>
            <person name="Ishikawa A."/>
            <person name="Kawashima K."/>
            <person name="Kimura T."/>
            <person name="Kishida Y."/>
            <person name="Kohara M."/>
            <person name="Matsumoto M."/>
            <person name="Matsuno A."/>
            <person name="Muraki A."/>
            <person name="Nakazaki N."/>
            <person name="Shimpo S."/>
            <person name="Sugimoto M."/>
            <person name="Takazawa M."/>
            <person name="Yamada M."/>
            <person name="Yasuda M."/>
            <person name="Tabata S."/>
        </authorList>
    </citation>
    <scope>NUCLEOTIDE SEQUENCE [LARGE SCALE GENOMIC DNA]</scope>
    <source>
        <strain>PCC 7120 / SAG 25.82 / UTEX 2576</strain>
    </source>
</reference>
<accession>Q8YN62</accession>
<feature type="chain" id="PRO_0000155229" description="Thymidylate kinase">
    <location>
        <begin position="1"/>
        <end position="211"/>
    </location>
</feature>
<feature type="binding site" evidence="1">
    <location>
        <begin position="10"/>
        <end position="17"/>
    </location>
    <ligand>
        <name>ATP</name>
        <dbReference type="ChEBI" id="CHEBI:30616"/>
    </ligand>
</feature>
<sequence>MGGRFIVFEGVEGCGKTSQMQLCAEWLQSLGISVVLTREPGGTELGLDLRRLLLQKAEDKPIAEVTELLLYAADRAQHVAQELKPKLAQGKYILCDRYVDSTIAYQGYGRNLDMNLIHQLNDIATGGLTSDITIWLDVDVEVGLARKRGDNVGLDRIEQETIAFHRRVQQGYADLAASSPKRIIRVDGQLSKETVHKTIQEILSVHLKQWL</sequence>
<protein>
    <recommendedName>
        <fullName evidence="1">Thymidylate kinase</fullName>
        <ecNumber evidence="1">2.7.4.9</ecNumber>
    </recommendedName>
    <alternativeName>
        <fullName evidence="1">dTMP kinase</fullName>
    </alternativeName>
</protein>
<name>KTHY_NOSS1</name>
<proteinExistence type="inferred from homology"/>
<comment type="function">
    <text evidence="1">Phosphorylation of dTMP to form dTDP in both de novo and salvage pathways of dTTP synthesis.</text>
</comment>
<comment type="catalytic activity">
    <reaction evidence="1">
        <text>dTMP + ATP = dTDP + ADP</text>
        <dbReference type="Rhea" id="RHEA:13517"/>
        <dbReference type="ChEBI" id="CHEBI:30616"/>
        <dbReference type="ChEBI" id="CHEBI:58369"/>
        <dbReference type="ChEBI" id="CHEBI:63528"/>
        <dbReference type="ChEBI" id="CHEBI:456216"/>
        <dbReference type="EC" id="2.7.4.9"/>
    </reaction>
</comment>
<comment type="similarity">
    <text evidence="1">Belongs to the thymidylate kinase family.</text>
</comment>
<organism>
    <name type="scientific">Nostoc sp. (strain PCC 7120 / SAG 25.82 / UTEX 2576)</name>
    <dbReference type="NCBI Taxonomy" id="103690"/>
    <lineage>
        <taxon>Bacteria</taxon>
        <taxon>Bacillati</taxon>
        <taxon>Cyanobacteriota</taxon>
        <taxon>Cyanophyceae</taxon>
        <taxon>Nostocales</taxon>
        <taxon>Nostocaceae</taxon>
        <taxon>Nostoc</taxon>
    </lineage>
</organism>